<feature type="chain" id="PRO_0000071803" description="UPF0225 protein YchJ">
    <location>
        <begin position="1"/>
        <end position="152"/>
    </location>
</feature>
<feature type="sequence conflict" description="In Ref. 1; AAC36845." evidence="1" ref="1">
    <original>MR</original>
    <variation>IG</variation>
    <location>
        <begin position="34"/>
        <end position="35"/>
    </location>
</feature>
<feature type="sequence conflict" description="In Ref. 1; AAC36845." evidence="1" ref="1">
    <original>AAA</original>
    <variation>QRP</variation>
    <location>
        <begin position="59"/>
        <end position="61"/>
    </location>
</feature>
<comment type="interaction">
    <interactant intactId="EBI-560596">
        <id>P37052</id>
    </interactant>
    <interactant intactId="EBI-554793">
        <id>P23482</id>
        <label>hyfB</label>
    </interactant>
    <organismsDiffer>false</organismsDiffer>
    <experiments>2</experiments>
</comment>
<comment type="similarity">
    <text evidence="1">Belongs to the UPF0225 family.</text>
</comment>
<reference key="1">
    <citation type="journal article" date="1993" name="J. Bacteriol.">
        <title>purU, a source of formate for purT-dependent phosphoribosyl-N-formylglycinamide synthesis.</title>
        <authorList>
            <person name="Nagy P.L."/>
            <person name="McCorkle G."/>
            <person name="Zalkin H."/>
        </authorList>
    </citation>
    <scope>NUCLEOTIDE SEQUENCE [GENOMIC DNA]</scope>
    <source>
        <strain>K12</strain>
    </source>
</reference>
<reference key="2">
    <citation type="journal article" date="1994" name="J. Bacteriol.">
        <title>Organization and functions of genes in the upstream region of tyrT of Escherichia coli: phenotypes of mutants with partial deletion of a new gene (tgs).</title>
        <authorList>
            <person name="Boesl M."/>
            <person name="Kersten H."/>
        </authorList>
    </citation>
    <scope>NUCLEOTIDE SEQUENCE [GENOMIC DNA]</scope>
    <source>
        <strain>K12</strain>
    </source>
</reference>
<reference key="3">
    <citation type="journal article" date="1996" name="DNA Res.">
        <title>A 718-kb DNA sequence of the Escherichia coli K-12 genome corresponding to the 12.7-28.0 min region on the linkage map.</title>
        <authorList>
            <person name="Oshima T."/>
            <person name="Aiba H."/>
            <person name="Baba T."/>
            <person name="Fujita K."/>
            <person name="Hayashi K."/>
            <person name="Honjo A."/>
            <person name="Ikemoto K."/>
            <person name="Inada T."/>
            <person name="Itoh T."/>
            <person name="Kajihara M."/>
            <person name="Kanai K."/>
            <person name="Kashimoto K."/>
            <person name="Kimura S."/>
            <person name="Kitagawa M."/>
            <person name="Makino K."/>
            <person name="Masuda S."/>
            <person name="Miki T."/>
            <person name="Mizobuchi K."/>
            <person name="Mori H."/>
            <person name="Motomura K."/>
            <person name="Nakamura Y."/>
            <person name="Nashimoto H."/>
            <person name="Nishio Y."/>
            <person name="Saito N."/>
            <person name="Sampei G."/>
            <person name="Seki Y."/>
            <person name="Tagami H."/>
            <person name="Takemoto K."/>
            <person name="Wada C."/>
            <person name="Yamamoto Y."/>
            <person name="Yano M."/>
            <person name="Horiuchi T."/>
        </authorList>
    </citation>
    <scope>NUCLEOTIDE SEQUENCE [LARGE SCALE GENOMIC DNA]</scope>
    <source>
        <strain>K12 / W3110 / ATCC 27325 / DSM 5911</strain>
    </source>
</reference>
<reference key="4">
    <citation type="journal article" date="1996" name="DNA Res.">
        <title>A 570-kb DNA sequence of the Escherichia coli K-12 genome corresponding to the 28.0-40.1 min region on the linkage map.</title>
        <authorList>
            <person name="Aiba H."/>
            <person name="Baba T."/>
            <person name="Fujita K."/>
            <person name="Hayashi K."/>
            <person name="Inada T."/>
            <person name="Isono K."/>
            <person name="Itoh T."/>
            <person name="Kasai H."/>
            <person name="Kashimoto K."/>
            <person name="Kimura S."/>
            <person name="Kitakawa M."/>
            <person name="Kitagawa M."/>
            <person name="Makino K."/>
            <person name="Miki T."/>
            <person name="Mizobuchi K."/>
            <person name="Mori H."/>
            <person name="Mori T."/>
            <person name="Motomura K."/>
            <person name="Nakade S."/>
            <person name="Nakamura Y."/>
            <person name="Nashimoto H."/>
            <person name="Nishio Y."/>
            <person name="Oshima T."/>
            <person name="Saito N."/>
            <person name="Sampei G."/>
            <person name="Seki Y."/>
            <person name="Sivasundaram S."/>
            <person name="Tagami H."/>
            <person name="Takeda J."/>
            <person name="Takemoto K."/>
            <person name="Takeuchi Y."/>
            <person name="Wada C."/>
            <person name="Yamamoto Y."/>
            <person name="Horiuchi T."/>
        </authorList>
    </citation>
    <scope>NUCLEOTIDE SEQUENCE [LARGE SCALE GENOMIC DNA]</scope>
    <source>
        <strain>K12 / W3110 / ATCC 27325 / DSM 5911</strain>
    </source>
</reference>
<reference key="5">
    <citation type="journal article" date="1997" name="Science">
        <title>The complete genome sequence of Escherichia coli K-12.</title>
        <authorList>
            <person name="Blattner F.R."/>
            <person name="Plunkett G. III"/>
            <person name="Bloch C.A."/>
            <person name="Perna N.T."/>
            <person name="Burland V."/>
            <person name="Riley M."/>
            <person name="Collado-Vides J."/>
            <person name="Glasner J.D."/>
            <person name="Rode C.K."/>
            <person name="Mayhew G.F."/>
            <person name="Gregor J."/>
            <person name="Davis N.W."/>
            <person name="Kirkpatrick H.A."/>
            <person name="Goeden M.A."/>
            <person name="Rose D.J."/>
            <person name="Mau B."/>
            <person name="Shao Y."/>
        </authorList>
    </citation>
    <scope>NUCLEOTIDE SEQUENCE [LARGE SCALE GENOMIC DNA]</scope>
    <source>
        <strain>K12 / MG1655 / ATCC 47076</strain>
    </source>
</reference>
<reference key="6">
    <citation type="journal article" date="2006" name="Mol. Syst. Biol.">
        <title>Highly accurate genome sequences of Escherichia coli K-12 strains MG1655 and W3110.</title>
        <authorList>
            <person name="Hayashi K."/>
            <person name="Morooka N."/>
            <person name="Yamamoto Y."/>
            <person name="Fujita K."/>
            <person name="Isono K."/>
            <person name="Choi S."/>
            <person name="Ohtsubo E."/>
            <person name="Baba T."/>
            <person name="Wanner B.L."/>
            <person name="Mori H."/>
            <person name="Horiuchi T."/>
        </authorList>
    </citation>
    <scope>NUCLEOTIDE SEQUENCE [LARGE SCALE GENOMIC DNA]</scope>
    <source>
        <strain>K12 / W3110 / ATCC 27325 / DSM 5911</strain>
    </source>
</reference>
<name>YCHJ_ECOLI</name>
<organism>
    <name type="scientific">Escherichia coli (strain K12)</name>
    <dbReference type="NCBI Taxonomy" id="83333"/>
    <lineage>
        <taxon>Bacteria</taxon>
        <taxon>Pseudomonadati</taxon>
        <taxon>Pseudomonadota</taxon>
        <taxon>Gammaproteobacteria</taxon>
        <taxon>Enterobacterales</taxon>
        <taxon>Enterobacteriaceae</taxon>
        <taxon>Escherichia</taxon>
    </lineage>
</organism>
<accession>P37052</accession>
<keyword id="KW-1185">Reference proteome</keyword>
<dbReference type="EMBL" id="L20251">
    <property type="protein sequence ID" value="AAC36845.1"/>
    <property type="molecule type" value="Unassigned_DNA"/>
</dbReference>
<dbReference type="EMBL" id="M64675">
    <property type="status" value="NOT_ANNOTATED_CDS"/>
    <property type="molecule type" value="Unassigned_DNA"/>
</dbReference>
<dbReference type="EMBL" id="U00096">
    <property type="protein sequence ID" value="AAC74315.1"/>
    <property type="molecule type" value="Genomic_DNA"/>
</dbReference>
<dbReference type="EMBL" id="AP009048">
    <property type="protein sequence ID" value="BAA36101.1"/>
    <property type="molecule type" value="Genomic_DNA"/>
</dbReference>
<dbReference type="PIR" id="D64870">
    <property type="entry name" value="D64870"/>
</dbReference>
<dbReference type="RefSeq" id="NP_415749.1">
    <property type="nucleotide sequence ID" value="NC_000913.3"/>
</dbReference>
<dbReference type="RefSeq" id="WP_001307143.1">
    <property type="nucleotide sequence ID" value="NZ_STEB01000005.1"/>
</dbReference>
<dbReference type="SMR" id="P37052"/>
<dbReference type="BioGRID" id="4261925">
    <property type="interactions" value="42"/>
</dbReference>
<dbReference type="BioGRID" id="850195">
    <property type="interactions" value="1"/>
</dbReference>
<dbReference type="DIP" id="DIP-11572N"/>
<dbReference type="FunCoup" id="P37052">
    <property type="interactions" value="38"/>
</dbReference>
<dbReference type="IntAct" id="P37052">
    <property type="interactions" value="27"/>
</dbReference>
<dbReference type="STRING" id="511145.b1233"/>
<dbReference type="jPOST" id="P37052"/>
<dbReference type="PaxDb" id="511145-b1233"/>
<dbReference type="EnsemblBacteria" id="AAC74315">
    <property type="protein sequence ID" value="AAC74315"/>
    <property type="gene ID" value="b1233"/>
</dbReference>
<dbReference type="GeneID" id="945828"/>
<dbReference type="KEGG" id="ecj:JW1221"/>
<dbReference type="KEGG" id="eco:b1233"/>
<dbReference type="KEGG" id="ecoc:C3026_07255"/>
<dbReference type="PATRIC" id="fig|511145.12.peg.1281"/>
<dbReference type="EchoBASE" id="EB2040"/>
<dbReference type="eggNOG" id="COG3012">
    <property type="taxonomic scope" value="Bacteria"/>
</dbReference>
<dbReference type="HOGENOM" id="CLU_099590_0_0_6"/>
<dbReference type="InParanoid" id="P37052"/>
<dbReference type="OMA" id="WLYVDGD"/>
<dbReference type="OrthoDB" id="21421at2"/>
<dbReference type="PhylomeDB" id="P37052"/>
<dbReference type="BioCyc" id="EcoCyc:EG12119-MONOMER"/>
<dbReference type="PRO" id="PR:P37052"/>
<dbReference type="Proteomes" id="UP000000625">
    <property type="component" value="Chromosome"/>
</dbReference>
<dbReference type="Gene3D" id="3.10.450.50">
    <property type="match status" value="1"/>
</dbReference>
<dbReference type="HAMAP" id="MF_00612">
    <property type="entry name" value="UPF0225"/>
    <property type="match status" value="1"/>
</dbReference>
<dbReference type="InterPro" id="IPR032710">
    <property type="entry name" value="NTF2-like_dom_sf"/>
</dbReference>
<dbReference type="InterPro" id="IPR004027">
    <property type="entry name" value="SEC_C_motif"/>
</dbReference>
<dbReference type="InterPro" id="IPR023006">
    <property type="entry name" value="UPF0225"/>
</dbReference>
<dbReference type="InterPro" id="IPR048469">
    <property type="entry name" value="YchJ-like_M"/>
</dbReference>
<dbReference type="NCBIfam" id="NF002449">
    <property type="entry name" value="PRK01617.1"/>
    <property type="match status" value="1"/>
</dbReference>
<dbReference type="NCBIfam" id="NF002486">
    <property type="entry name" value="PRK01752.1"/>
    <property type="match status" value="1"/>
</dbReference>
<dbReference type="PANTHER" id="PTHR33747:SF1">
    <property type="entry name" value="ADENYLATE CYCLASE-ASSOCIATED CAP C-TERMINAL DOMAIN-CONTAINING PROTEIN"/>
    <property type="match status" value="1"/>
</dbReference>
<dbReference type="PANTHER" id="PTHR33747">
    <property type="entry name" value="UPF0225 PROTEIN SCO1677"/>
    <property type="match status" value="1"/>
</dbReference>
<dbReference type="Pfam" id="PF02810">
    <property type="entry name" value="SEC-C"/>
    <property type="match status" value="2"/>
</dbReference>
<dbReference type="Pfam" id="PF17775">
    <property type="entry name" value="YchJ_M-like"/>
    <property type="match status" value="1"/>
</dbReference>
<dbReference type="SUPFAM" id="SSF54427">
    <property type="entry name" value="NTF2-like"/>
    <property type="match status" value="1"/>
</dbReference>
<dbReference type="SUPFAM" id="SSF103642">
    <property type="entry name" value="Sec-C motif"/>
    <property type="match status" value="1"/>
</dbReference>
<evidence type="ECO:0000305" key="1"/>
<proteinExistence type="evidence at protein level"/>
<sequence length="152" mass="16990">MSQLCPCGSAVEYSLCCHPYVSGEKVAPDPEHLMRSRYCAFVMQDADYLIKTWHPSCGAAALRAELMAGFAHTEWLGLTVFEHCWQDADNIGFVSFVARFTEGGKTGAIIERSRFLKENGQWYYIDGTRPQFGRNDPCPCGSGKKFKKCCGQ</sequence>
<gene>
    <name type="primary">ychJ</name>
    <name type="ordered locus">b1233</name>
    <name type="ordered locus">JW1221</name>
</gene>
<protein>
    <recommendedName>
        <fullName>UPF0225 protein YchJ</fullName>
    </recommendedName>
</protein>